<evidence type="ECO:0000250" key="1">
    <source>
        <dbReference type="UniProtKB" id="P0AFP6"/>
    </source>
</evidence>
<evidence type="ECO:0000305" key="2"/>
<accession>Q9PKS8</accession>
<dbReference type="EMBL" id="AE002160">
    <property type="protein sequence ID" value="AAF39241.1"/>
    <property type="molecule type" value="Genomic_DNA"/>
</dbReference>
<dbReference type="PIR" id="B81709">
    <property type="entry name" value="B81709"/>
</dbReference>
<dbReference type="RefSeq" id="WP_010230301.1">
    <property type="nucleotide sequence ID" value="NZ_CP063055.1"/>
</dbReference>
<dbReference type="SMR" id="Q9PKS8"/>
<dbReference type="GeneID" id="1245736"/>
<dbReference type="KEGG" id="cmu:TC_0384"/>
<dbReference type="eggNOG" id="COG0327">
    <property type="taxonomic scope" value="Bacteria"/>
</dbReference>
<dbReference type="HOGENOM" id="CLU_037423_3_0_0"/>
<dbReference type="OrthoDB" id="9792792at2"/>
<dbReference type="Proteomes" id="UP000000800">
    <property type="component" value="Chromosome"/>
</dbReference>
<dbReference type="GO" id="GO:0005737">
    <property type="term" value="C:cytoplasm"/>
    <property type="evidence" value="ECO:0007669"/>
    <property type="project" value="TreeGrafter"/>
</dbReference>
<dbReference type="GO" id="GO:0046872">
    <property type="term" value="F:metal ion binding"/>
    <property type="evidence" value="ECO:0007669"/>
    <property type="project" value="UniProtKB-KW"/>
</dbReference>
<dbReference type="FunFam" id="3.40.1390.30:FF:000001">
    <property type="entry name" value="GTP cyclohydrolase 1 type 2"/>
    <property type="match status" value="1"/>
</dbReference>
<dbReference type="Gene3D" id="3.40.1390.30">
    <property type="entry name" value="NIF3 (NGG1p interacting factor 3)-like"/>
    <property type="match status" value="2"/>
</dbReference>
<dbReference type="InterPro" id="IPR002678">
    <property type="entry name" value="DUF34/NIF3"/>
</dbReference>
<dbReference type="InterPro" id="IPR036069">
    <property type="entry name" value="DUF34/NIF3_sf"/>
</dbReference>
<dbReference type="NCBIfam" id="TIGR00486">
    <property type="entry name" value="YbgI_SA1388"/>
    <property type="match status" value="1"/>
</dbReference>
<dbReference type="PANTHER" id="PTHR13799:SF14">
    <property type="entry name" value="GTP CYCLOHYDROLASE 1 TYPE 2 HOMOLOG"/>
    <property type="match status" value="1"/>
</dbReference>
<dbReference type="PANTHER" id="PTHR13799">
    <property type="entry name" value="NGG1 INTERACTING FACTOR 3"/>
    <property type="match status" value="1"/>
</dbReference>
<dbReference type="Pfam" id="PF01784">
    <property type="entry name" value="DUF34_NIF3"/>
    <property type="match status" value="1"/>
</dbReference>
<dbReference type="SUPFAM" id="SSF102705">
    <property type="entry name" value="NIF3 (NGG1p interacting factor 3)-like"/>
    <property type="match status" value="1"/>
</dbReference>
<organism>
    <name type="scientific">Chlamydia muridarum (strain MoPn / Nigg)</name>
    <dbReference type="NCBI Taxonomy" id="243161"/>
    <lineage>
        <taxon>Bacteria</taxon>
        <taxon>Pseudomonadati</taxon>
        <taxon>Chlamydiota</taxon>
        <taxon>Chlamydiia</taxon>
        <taxon>Chlamydiales</taxon>
        <taxon>Chlamydiaceae</taxon>
        <taxon>Chlamydia/Chlamydophila group</taxon>
        <taxon>Chlamydia</taxon>
    </lineage>
</organism>
<protein>
    <recommendedName>
        <fullName>GTP cyclohydrolase 1 type 2 homolog</fullName>
    </recommendedName>
</protein>
<reference key="1">
    <citation type="journal article" date="2000" name="Nucleic Acids Res.">
        <title>Genome sequences of Chlamydia trachomatis MoPn and Chlamydia pneumoniae AR39.</title>
        <authorList>
            <person name="Read T.D."/>
            <person name="Brunham R.C."/>
            <person name="Shen C."/>
            <person name="Gill S.R."/>
            <person name="Heidelberg J.F."/>
            <person name="White O."/>
            <person name="Hickey E.K."/>
            <person name="Peterson J.D."/>
            <person name="Utterback T.R."/>
            <person name="Berry K.J."/>
            <person name="Bass S."/>
            <person name="Linher K.D."/>
            <person name="Weidman J.F."/>
            <person name="Khouri H.M."/>
            <person name="Craven B."/>
            <person name="Bowman C."/>
            <person name="Dodson R.J."/>
            <person name="Gwinn M.L."/>
            <person name="Nelson W.C."/>
            <person name="DeBoy R.T."/>
            <person name="Kolonay J.F."/>
            <person name="McClarty G."/>
            <person name="Salzberg S.L."/>
            <person name="Eisen J.A."/>
            <person name="Fraser C.M."/>
        </authorList>
    </citation>
    <scope>NUCLEOTIDE SEQUENCE [LARGE SCALE GENOMIC DNA]</scope>
    <source>
        <strain>MoPn / Nigg</strain>
    </source>
</reference>
<gene>
    <name type="ordered locus">TC_0384</name>
</gene>
<feature type="chain" id="PRO_0000147301" description="GTP cyclohydrolase 1 type 2 homolog">
    <location>
        <begin position="1"/>
        <end position="251"/>
    </location>
</feature>
<feature type="binding site" evidence="1">
    <location>
        <position position="64"/>
    </location>
    <ligand>
        <name>a divalent metal cation</name>
        <dbReference type="ChEBI" id="CHEBI:60240"/>
        <label>1</label>
    </ligand>
</feature>
<feature type="binding site" evidence="1">
    <location>
        <position position="65"/>
    </location>
    <ligand>
        <name>a divalent metal cation</name>
        <dbReference type="ChEBI" id="CHEBI:60240"/>
        <label>2</label>
    </ligand>
</feature>
<feature type="binding site" evidence="1">
    <location>
        <position position="102"/>
    </location>
    <ligand>
        <name>a divalent metal cation</name>
        <dbReference type="ChEBI" id="CHEBI:60240"/>
        <label>1</label>
    </ligand>
</feature>
<feature type="binding site" evidence="1">
    <location>
        <position position="219"/>
    </location>
    <ligand>
        <name>a divalent metal cation</name>
        <dbReference type="ChEBI" id="CHEBI:60240"/>
        <label>2</label>
    </ligand>
</feature>
<feature type="binding site" evidence="1">
    <location>
        <position position="223"/>
    </location>
    <ligand>
        <name>a divalent metal cation</name>
        <dbReference type="ChEBI" id="CHEBI:60240"/>
        <label>1</label>
    </ligand>
</feature>
<feature type="binding site" evidence="1">
    <location>
        <position position="223"/>
    </location>
    <ligand>
        <name>a divalent metal cation</name>
        <dbReference type="ChEBI" id="CHEBI:60240"/>
        <label>2</label>
    </ligand>
</feature>
<proteinExistence type="inferred from homology"/>
<keyword id="KW-0479">Metal-binding</keyword>
<comment type="subunit">
    <text evidence="1">Homohexamer.</text>
</comment>
<comment type="similarity">
    <text evidence="2">Belongs to the GTP cyclohydrolase I type 2/NIF3 family.</text>
</comment>
<name>GCH1L_CHLMU</name>
<sequence length="251" mass="27458">MNVADLLHVLNELLYPELFNDYGPNGLQVGDAQAPVRKIAVAVTADLATIEKAIACESNVLLVHHGLFWKGMPYPITGMLYQRMQRLIENNIQLIAYHLPLDAHPEVGNNWKVAKDLGWERLESFGSTKPSLGVKGVFPEIGIHDFVSQLSSYYQAPVLAKALGGKESISSAALISGGAYKEISEAKSQEVDCFITGNFDEPAWSLAHELAINFLAFGHTATEKVGPKALTQYLKQVGCDSVVFLDTENPF</sequence>